<name>TPBA_PSEAE</name>
<protein>
    <recommendedName>
        <fullName evidence="7">Dual specificity protein phosphatase TpbA</fullName>
        <shortName evidence="6">DUSP</shortName>
        <ecNumber evidence="1">3.1.3.16</ecNumber>
        <ecNumber evidence="4">3.1.3.48</ecNumber>
    </recommendedName>
    <alternativeName>
        <fullName evidence="7">Dual specific tyrosine phosphatase</fullName>
    </alternativeName>
    <alternativeName>
        <fullName evidence="6">Tyrosine phosphatase related to biofilm formation A</fullName>
    </alternativeName>
</protein>
<keyword id="KW-0002">3D-structure</keyword>
<keyword id="KW-0378">Hydrolase</keyword>
<keyword id="KW-0574">Periplasm</keyword>
<keyword id="KW-0904">Protein phosphatase</keyword>
<keyword id="KW-1185">Reference proteome</keyword>
<keyword id="KW-0732">Signal</keyword>
<proteinExistence type="evidence at protein level"/>
<gene>
    <name evidence="5" type="primary">tpbA</name>
    <name evidence="9" type="ordered locus">PA3885</name>
</gene>
<dbReference type="EC" id="3.1.3.16" evidence="1"/>
<dbReference type="EC" id="3.1.3.48" evidence="4"/>
<dbReference type="EMBL" id="AE004091">
    <property type="protein sequence ID" value="AAG07272.1"/>
    <property type="molecule type" value="Genomic_DNA"/>
</dbReference>
<dbReference type="PIR" id="D83161">
    <property type="entry name" value="D83161"/>
</dbReference>
<dbReference type="RefSeq" id="NP_252574.1">
    <property type="nucleotide sequence ID" value="NC_002516.2"/>
</dbReference>
<dbReference type="RefSeq" id="WP_003105672.1">
    <property type="nucleotide sequence ID" value="NZ_QZGE01000001.1"/>
</dbReference>
<dbReference type="PDB" id="4R0S">
    <property type="method" value="X-ray"/>
    <property type="resolution" value="2.03 A"/>
    <property type="chains" value="A/B=1-218"/>
</dbReference>
<dbReference type="PDB" id="4R0T">
    <property type="method" value="X-ray"/>
    <property type="resolution" value="2.60 A"/>
    <property type="chains" value="A/B=1-218"/>
</dbReference>
<dbReference type="PDBsum" id="4R0S"/>
<dbReference type="PDBsum" id="4R0T"/>
<dbReference type="SMR" id="Q9HXC7"/>
<dbReference type="STRING" id="208964.PA3885"/>
<dbReference type="PaxDb" id="208964-PA3885"/>
<dbReference type="DNASU" id="878776"/>
<dbReference type="GeneID" id="878776"/>
<dbReference type="KEGG" id="pae:PA3885"/>
<dbReference type="PATRIC" id="fig|208964.12.peg.4068"/>
<dbReference type="PseudoCAP" id="PA3885"/>
<dbReference type="HOGENOM" id="CLU_086657_0_0_6"/>
<dbReference type="InParanoid" id="Q9HXC7"/>
<dbReference type="OrthoDB" id="9814896at2"/>
<dbReference type="BioCyc" id="PAER208964:G1FZ6-3957-MONOMER"/>
<dbReference type="BRENDA" id="3.1.3.48">
    <property type="organism ID" value="5087"/>
</dbReference>
<dbReference type="EvolutionaryTrace" id="Q9HXC7"/>
<dbReference type="Proteomes" id="UP000002438">
    <property type="component" value="Chromosome"/>
</dbReference>
<dbReference type="GO" id="GO:0042597">
    <property type="term" value="C:periplasmic space"/>
    <property type="evidence" value="ECO:0000314"/>
    <property type="project" value="PseudoCAP"/>
</dbReference>
<dbReference type="GO" id="GO:0016791">
    <property type="term" value="F:phosphatase activity"/>
    <property type="evidence" value="ECO:0000318"/>
    <property type="project" value="GO_Central"/>
</dbReference>
<dbReference type="GO" id="GO:0004725">
    <property type="term" value="F:protein tyrosine phosphatase activity"/>
    <property type="evidence" value="ECO:0000314"/>
    <property type="project" value="PseudoCAP"/>
</dbReference>
<dbReference type="CDD" id="cd14529">
    <property type="entry name" value="TpbA-like"/>
    <property type="match status" value="1"/>
</dbReference>
<dbReference type="FunFam" id="3.90.190.10:FF:000177">
    <property type="entry name" value="Protein tyrosine phosphatase TpbA"/>
    <property type="match status" value="1"/>
</dbReference>
<dbReference type="Gene3D" id="3.90.190.10">
    <property type="entry name" value="Protein tyrosine phosphatase superfamily"/>
    <property type="match status" value="1"/>
</dbReference>
<dbReference type="InterPro" id="IPR029021">
    <property type="entry name" value="Prot-tyrosine_phosphatase-like"/>
</dbReference>
<dbReference type="InterPro" id="IPR004861">
    <property type="entry name" value="Siw14-like"/>
</dbReference>
<dbReference type="InterPro" id="IPR016130">
    <property type="entry name" value="Tyr_Pase_AS"/>
</dbReference>
<dbReference type="InterPro" id="IPR000387">
    <property type="entry name" value="Tyr_Pase_dom"/>
</dbReference>
<dbReference type="PANTHER" id="PTHR31126:SF72">
    <property type="entry name" value="DUAL SPECIFICITY PROTEIN PHOSPHATASE TPBA"/>
    <property type="match status" value="1"/>
</dbReference>
<dbReference type="PANTHER" id="PTHR31126">
    <property type="entry name" value="TYROSINE-PROTEIN PHOSPHATASE"/>
    <property type="match status" value="1"/>
</dbReference>
<dbReference type="Pfam" id="PF03162">
    <property type="entry name" value="Y_phosphatase2"/>
    <property type="match status" value="1"/>
</dbReference>
<dbReference type="SUPFAM" id="SSF52799">
    <property type="entry name" value="(Phosphotyrosine protein) phosphatases II"/>
    <property type="match status" value="1"/>
</dbReference>
<dbReference type="PROSITE" id="PS00383">
    <property type="entry name" value="TYR_PHOSPHATASE_1"/>
    <property type="match status" value="1"/>
</dbReference>
<dbReference type="PROSITE" id="PS50056">
    <property type="entry name" value="TYR_PHOSPHATASE_2"/>
    <property type="match status" value="1"/>
</dbReference>
<comment type="function">
    <text evidence="1 4">Phosphatase that regulates diverse phenotypes in P.aeruginosa via regulation of the concentration of cellular c-di-GMP (By similarity). Acts by dephosphorylating the membrane-anchored diguanylate cyclase TpbB at tyrosine and serine/threonine sites, leading to inactivation of TpbB and reduced c-di-GMP production (By similarity). In vitro shows phosphatase activity toward p-nitrophenyl phosphate (pNPP) and tyrosine phosphopeptides (PubMed:25909591). Can efficiently dephosphorylate two phosphorylated peptides derived from the periplasmic domain of TpbB, with a strong preference for Tyr-48 over Tyr-62 (PubMed:25909591).</text>
</comment>
<comment type="catalytic activity">
    <reaction evidence="4">
        <text>O-phospho-L-tyrosyl-[protein] + H2O = L-tyrosyl-[protein] + phosphate</text>
        <dbReference type="Rhea" id="RHEA:10684"/>
        <dbReference type="Rhea" id="RHEA-COMP:10136"/>
        <dbReference type="Rhea" id="RHEA-COMP:20101"/>
        <dbReference type="ChEBI" id="CHEBI:15377"/>
        <dbReference type="ChEBI" id="CHEBI:43474"/>
        <dbReference type="ChEBI" id="CHEBI:46858"/>
        <dbReference type="ChEBI" id="CHEBI:61978"/>
        <dbReference type="EC" id="3.1.3.48"/>
    </reaction>
    <physiologicalReaction direction="left-to-right" evidence="4">
        <dbReference type="Rhea" id="RHEA:10685"/>
    </physiologicalReaction>
</comment>
<comment type="catalytic activity">
    <reaction evidence="1">
        <text>O-phospho-L-threonyl-[protein] + H2O = L-threonyl-[protein] + phosphate</text>
        <dbReference type="Rhea" id="RHEA:47004"/>
        <dbReference type="Rhea" id="RHEA-COMP:11060"/>
        <dbReference type="Rhea" id="RHEA-COMP:11605"/>
        <dbReference type="ChEBI" id="CHEBI:15377"/>
        <dbReference type="ChEBI" id="CHEBI:30013"/>
        <dbReference type="ChEBI" id="CHEBI:43474"/>
        <dbReference type="ChEBI" id="CHEBI:61977"/>
        <dbReference type="EC" id="3.1.3.16"/>
    </reaction>
</comment>
<comment type="catalytic activity">
    <reaction evidence="1">
        <text>O-phospho-L-seryl-[protein] + H2O = L-seryl-[protein] + phosphate</text>
        <dbReference type="Rhea" id="RHEA:20629"/>
        <dbReference type="Rhea" id="RHEA-COMP:9863"/>
        <dbReference type="Rhea" id="RHEA-COMP:11604"/>
        <dbReference type="ChEBI" id="CHEBI:15377"/>
        <dbReference type="ChEBI" id="CHEBI:29999"/>
        <dbReference type="ChEBI" id="CHEBI:43474"/>
        <dbReference type="ChEBI" id="CHEBI:83421"/>
        <dbReference type="EC" id="3.1.3.16"/>
    </reaction>
</comment>
<comment type="biophysicochemical properties">
    <kinetics>
        <KM evidence="4">1.62 mM for pNPP</KM>
        <text evidence="4">kcat is 0.0076 sec(-1) with pNPP as substrate.</text>
    </kinetics>
</comment>
<comment type="subcellular location">
    <subcellularLocation>
        <location evidence="1">Periplasm</location>
    </subcellularLocation>
</comment>
<comment type="domain">
    <text evidence="4">Adopts a canonical dual specific tyrosine phosphatase (DUSP) fold, similar to eukaryotic DUSPs (PubMed:25909591). Conformational changes occur upon ligand binding (PubMed:25909591).</text>
</comment>
<comment type="similarity">
    <text evidence="7">Belongs to the protein-tyrosine phosphatase family.</text>
</comment>
<sequence>MHRSPLAWLRLLLAAVLGAFLLGGPLHAAETAATRSPAWAQAVDPSINLYRMSPTLYRSALPNAQSVALLQRLQVKTVVSFIKDDDRAWLGQAPVRVLSLPTHADRVDDAEVLSVLRQLQAAEREGPVLMHCKHGNNRTGLFAAMYRIVVQGWDKQAALEEMQHGGFGDEDDMRDASAYVRGADVDGLRLAMANGECSPSRFAVCHVREWMAQALDRP</sequence>
<organism>
    <name type="scientific">Pseudomonas aeruginosa (strain ATCC 15692 / DSM 22644 / CIP 104116 / JCM 14847 / LMG 12228 / 1C / PRS 101 / PAO1)</name>
    <dbReference type="NCBI Taxonomy" id="208964"/>
    <lineage>
        <taxon>Bacteria</taxon>
        <taxon>Pseudomonadati</taxon>
        <taxon>Pseudomonadota</taxon>
        <taxon>Gammaproteobacteria</taxon>
        <taxon>Pseudomonadales</taxon>
        <taxon>Pseudomonadaceae</taxon>
        <taxon>Pseudomonas</taxon>
    </lineage>
</organism>
<accession>Q9HXC7</accession>
<reference key="1">
    <citation type="journal article" date="2000" name="Nature">
        <title>Complete genome sequence of Pseudomonas aeruginosa PAO1, an opportunistic pathogen.</title>
        <authorList>
            <person name="Stover C.K."/>
            <person name="Pham X.-Q.T."/>
            <person name="Erwin A.L."/>
            <person name="Mizoguchi S.D."/>
            <person name="Warrener P."/>
            <person name="Hickey M.J."/>
            <person name="Brinkman F.S.L."/>
            <person name="Hufnagle W.O."/>
            <person name="Kowalik D.J."/>
            <person name="Lagrou M."/>
            <person name="Garber R.L."/>
            <person name="Goltry L."/>
            <person name="Tolentino E."/>
            <person name="Westbrock-Wadman S."/>
            <person name="Yuan Y."/>
            <person name="Brody L.L."/>
            <person name="Coulter S.N."/>
            <person name="Folger K.R."/>
            <person name="Kas A."/>
            <person name="Larbig K."/>
            <person name="Lim R.M."/>
            <person name="Smith K.A."/>
            <person name="Spencer D.H."/>
            <person name="Wong G.K.-S."/>
            <person name="Wu Z."/>
            <person name="Paulsen I.T."/>
            <person name="Reizer J."/>
            <person name="Saier M.H. Jr."/>
            <person name="Hancock R.E.W."/>
            <person name="Lory S."/>
            <person name="Olson M.V."/>
        </authorList>
    </citation>
    <scope>NUCLEOTIDE SEQUENCE [LARGE SCALE GENOMIC DNA]</scope>
    <source>
        <strain>ATCC 15692 / DSM 22644 / CIP 104116 / JCM 14847 / LMG 12228 / 1C / PRS 101 / PAO1</strain>
    </source>
</reference>
<reference key="2">
    <citation type="journal article" date="2010" name="Acta Crystallogr. F">
        <title>Expression, purification, crystallization and preliminary crystallographic analysis of PA3885 (TpbA) from Pseudomonas aeruginosa PAO1.</title>
        <authorList>
            <person name="Yang W."/>
            <person name="Li K."/>
            <person name="Bai Y."/>
            <person name="Zhou R."/>
            <person name="Zhou W."/>
            <person name="Bartlam M."/>
        </authorList>
    </citation>
    <scope>CRYSTALLIZATION</scope>
    <source>
        <strain>ATCC 15692 / DSM 22644 / CIP 104116 / JCM 14847 / LMG 12228 / 1C / PRS 101 / PAO1</strain>
    </source>
</reference>
<reference evidence="10 11" key="3">
    <citation type="journal article" date="2015" name="PLoS ONE">
        <title>Structural and biochemical analysis of tyrosine phosphatase related to biofilm formation A (TpbA) from the opportunistic pathogen Pseudomonas aeruginosa PAO1.</title>
        <authorList>
            <person name="Xu K."/>
            <person name="Li S."/>
            <person name="Yang W."/>
            <person name="Li K."/>
            <person name="Bai Y."/>
            <person name="Xu Y."/>
            <person name="Jin J."/>
            <person name="Wang Y."/>
            <person name="Bartlam M."/>
        </authorList>
    </citation>
    <scope>X-RAY CRYSTALLOGRAPHY (2.03 ANGSTROMS) OF WILD TYPE AND MUTANT SER-132 IN COMPLEX WITH TYROSINE</scope>
    <scope>FUNCTION</scope>
    <scope>CATALYTIC ACTIVITY</scope>
    <scope>BIOPHYSICOCHEMICAL PROPERTIES</scope>
    <scope>DOMAIN</scope>
    <source>
        <strain>ATCC 15692 / DSM 22644 / CIP 104116 / JCM 14847 / LMG 12228 / 1C / PRS 101 / PAO1</strain>
    </source>
</reference>
<feature type="signal peptide" evidence="2">
    <location>
        <begin position="1"/>
        <end position="28"/>
    </location>
</feature>
<feature type="chain" id="PRO_5004327358" description="Dual specificity protein phosphatase TpbA">
    <location>
        <begin position="29"/>
        <end position="218"/>
    </location>
</feature>
<feature type="domain" description="Tyrosine-protein phosphatase" evidence="3">
    <location>
        <begin position="44"/>
        <end position="188"/>
    </location>
</feature>
<feature type="active site" description="Proton donor/acceptor" evidence="8">
    <location>
        <position position="105"/>
    </location>
</feature>
<feature type="active site" description="Phosphocysteine intermediate" evidence="3 8">
    <location>
        <position position="132"/>
    </location>
</feature>
<feature type="strand" evidence="12">
    <location>
        <begin position="41"/>
        <end position="44"/>
    </location>
</feature>
<feature type="helix" evidence="12">
    <location>
        <begin position="45"/>
        <end position="47"/>
    </location>
</feature>
<feature type="strand" evidence="12">
    <location>
        <begin position="49"/>
        <end position="53"/>
    </location>
</feature>
<feature type="strand" evidence="12">
    <location>
        <begin position="56"/>
        <end position="60"/>
    </location>
</feature>
<feature type="helix" evidence="12">
    <location>
        <begin position="64"/>
        <end position="66"/>
    </location>
</feature>
<feature type="helix" evidence="12">
    <location>
        <begin position="67"/>
        <end position="72"/>
    </location>
</feature>
<feature type="strand" evidence="12">
    <location>
        <begin position="77"/>
        <end position="84"/>
    </location>
</feature>
<feature type="helix" evidence="12">
    <location>
        <begin position="87"/>
        <end position="90"/>
    </location>
</feature>
<feature type="strand" evidence="12">
    <location>
        <begin position="96"/>
        <end position="99"/>
    </location>
</feature>
<feature type="helix" evidence="12">
    <location>
        <begin position="104"/>
        <end position="106"/>
    </location>
</feature>
<feature type="helix" evidence="12">
    <location>
        <begin position="109"/>
        <end position="125"/>
    </location>
</feature>
<feature type="strand" evidence="12">
    <location>
        <begin position="128"/>
        <end position="131"/>
    </location>
</feature>
<feature type="strand" evidence="12">
    <location>
        <begin position="133"/>
        <end position="137"/>
    </location>
</feature>
<feature type="helix" evidence="12">
    <location>
        <begin position="138"/>
        <end position="149"/>
    </location>
</feature>
<feature type="helix" evidence="12">
    <location>
        <begin position="156"/>
        <end position="164"/>
    </location>
</feature>
<feature type="strand" evidence="12">
    <location>
        <begin position="165"/>
        <end position="167"/>
    </location>
</feature>
<feature type="helix" evidence="12">
    <location>
        <begin position="170"/>
        <end position="173"/>
    </location>
</feature>
<feature type="helix" evidence="12">
    <location>
        <begin position="174"/>
        <end position="182"/>
    </location>
</feature>
<feature type="helix" evidence="12">
    <location>
        <begin position="185"/>
        <end position="193"/>
    </location>
</feature>
<evidence type="ECO:0000250" key="1">
    <source>
        <dbReference type="UniProtKB" id="A0A0H2ZFK2"/>
    </source>
</evidence>
<evidence type="ECO:0000255" key="2"/>
<evidence type="ECO:0000255" key="3">
    <source>
        <dbReference type="PROSITE-ProRule" id="PRU00160"/>
    </source>
</evidence>
<evidence type="ECO:0000269" key="4">
    <source>
    </source>
</evidence>
<evidence type="ECO:0000303" key="5">
    <source>
    </source>
</evidence>
<evidence type="ECO:0000303" key="6">
    <source>
    </source>
</evidence>
<evidence type="ECO:0000305" key="7"/>
<evidence type="ECO:0000305" key="8">
    <source>
    </source>
</evidence>
<evidence type="ECO:0000312" key="9">
    <source>
        <dbReference type="EMBL" id="AAG07272.1"/>
    </source>
</evidence>
<evidence type="ECO:0007744" key="10">
    <source>
        <dbReference type="PDB" id="4R0S"/>
    </source>
</evidence>
<evidence type="ECO:0007744" key="11">
    <source>
        <dbReference type="PDB" id="4R0T"/>
    </source>
</evidence>
<evidence type="ECO:0007829" key="12">
    <source>
        <dbReference type="PDB" id="4R0S"/>
    </source>
</evidence>